<name>RL14_POLNA</name>
<sequence>MIQTQSKLDVADNTGAKSVMCIKVLGGSKRRYASVGDVIKVSIKEAAPRGRVKKGEVYSAVVVRTAKGIRRGDGSLVKFDGNAAVLLNAKLEPIGTRIFGPVTRELRTEKFMKIVSLAPEVL</sequence>
<organism>
    <name type="scientific">Polaromonas naphthalenivorans (strain CJ2)</name>
    <dbReference type="NCBI Taxonomy" id="365044"/>
    <lineage>
        <taxon>Bacteria</taxon>
        <taxon>Pseudomonadati</taxon>
        <taxon>Pseudomonadota</taxon>
        <taxon>Betaproteobacteria</taxon>
        <taxon>Burkholderiales</taxon>
        <taxon>Comamonadaceae</taxon>
        <taxon>Polaromonas</taxon>
    </lineage>
</organism>
<evidence type="ECO:0000255" key="1">
    <source>
        <dbReference type="HAMAP-Rule" id="MF_01367"/>
    </source>
</evidence>
<evidence type="ECO:0000305" key="2"/>
<proteinExistence type="inferred from homology"/>
<gene>
    <name evidence="1" type="primary">rplN</name>
    <name type="ordered locus">Pnap_0330</name>
</gene>
<reference key="1">
    <citation type="journal article" date="2009" name="Environ. Microbiol.">
        <title>The genome of Polaromonas naphthalenivorans strain CJ2, isolated from coal tar-contaminated sediment, reveals physiological and metabolic versatility and evolution through extensive horizontal gene transfer.</title>
        <authorList>
            <person name="Yagi J.M."/>
            <person name="Sims D."/>
            <person name="Brettin T."/>
            <person name="Bruce D."/>
            <person name="Madsen E.L."/>
        </authorList>
    </citation>
    <scope>NUCLEOTIDE SEQUENCE [LARGE SCALE GENOMIC DNA]</scope>
    <source>
        <strain>CJ2</strain>
    </source>
</reference>
<protein>
    <recommendedName>
        <fullName evidence="1">Large ribosomal subunit protein uL14</fullName>
    </recommendedName>
    <alternativeName>
        <fullName evidence="2">50S ribosomal protein L14</fullName>
    </alternativeName>
</protein>
<keyword id="KW-1185">Reference proteome</keyword>
<keyword id="KW-0687">Ribonucleoprotein</keyword>
<keyword id="KW-0689">Ribosomal protein</keyword>
<keyword id="KW-0694">RNA-binding</keyword>
<keyword id="KW-0699">rRNA-binding</keyword>
<feature type="chain" id="PRO_1000055664" description="Large ribosomal subunit protein uL14">
    <location>
        <begin position="1"/>
        <end position="122"/>
    </location>
</feature>
<comment type="function">
    <text evidence="1">Binds to 23S rRNA. Forms part of two intersubunit bridges in the 70S ribosome.</text>
</comment>
<comment type="subunit">
    <text evidence="1">Part of the 50S ribosomal subunit. Forms a cluster with proteins L3 and L19. In the 70S ribosome, L14 and L19 interact and together make contacts with the 16S rRNA in bridges B5 and B8.</text>
</comment>
<comment type="similarity">
    <text evidence="1">Belongs to the universal ribosomal protein uL14 family.</text>
</comment>
<accession>A1VJ25</accession>
<dbReference type="EMBL" id="CP000529">
    <property type="protein sequence ID" value="ABM35653.1"/>
    <property type="molecule type" value="Genomic_DNA"/>
</dbReference>
<dbReference type="RefSeq" id="WP_007869247.1">
    <property type="nucleotide sequence ID" value="NC_008781.1"/>
</dbReference>
<dbReference type="SMR" id="A1VJ25"/>
<dbReference type="STRING" id="365044.Pnap_0330"/>
<dbReference type="KEGG" id="pna:Pnap_0330"/>
<dbReference type="eggNOG" id="COG0093">
    <property type="taxonomic scope" value="Bacteria"/>
</dbReference>
<dbReference type="HOGENOM" id="CLU_095071_2_1_4"/>
<dbReference type="OrthoDB" id="9806379at2"/>
<dbReference type="Proteomes" id="UP000000644">
    <property type="component" value="Chromosome"/>
</dbReference>
<dbReference type="GO" id="GO:0022625">
    <property type="term" value="C:cytosolic large ribosomal subunit"/>
    <property type="evidence" value="ECO:0007669"/>
    <property type="project" value="TreeGrafter"/>
</dbReference>
<dbReference type="GO" id="GO:0070180">
    <property type="term" value="F:large ribosomal subunit rRNA binding"/>
    <property type="evidence" value="ECO:0007669"/>
    <property type="project" value="TreeGrafter"/>
</dbReference>
<dbReference type="GO" id="GO:0003735">
    <property type="term" value="F:structural constituent of ribosome"/>
    <property type="evidence" value="ECO:0007669"/>
    <property type="project" value="InterPro"/>
</dbReference>
<dbReference type="GO" id="GO:0006412">
    <property type="term" value="P:translation"/>
    <property type="evidence" value="ECO:0007669"/>
    <property type="project" value="UniProtKB-UniRule"/>
</dbReference>
<dbReference type="CDD" id="cd00337">
    <property type="entry name" value="Ribosomal_uL14"/>
    <property type="match status" value="1"/>
</dbReference>
<dbReference type="FunFam" id="2.40.150.20:FF:000001">
    <property type="entry name" value="50S ribosomal protein L14"/>
    <property type="match status" value="1"/>
</dbReference>
<dbReference type="Gene3D" id="2.40.150.20">
    <property type="entry name" value="Ribosomal protein L14"/>
    <property type="match status" value="1"/>
</dbReference>
<dbReference type="HAMAP" id="MF_01367">
    <property type="entry name" value="Ribosomal_uL14"/>
    <property type="match status" value="1"/>
</dbReference>
<dbReference type="InterPro" id="IPR000218">
    <property type="entry name" value="Ribosomal_uL14"/>
</dbReference>
<dbReference type="InterPro" id="IPR005745">
    <property type="entry name" value="Ribosomal_uL14_bac-type"/>
</dbReference>
<dbReference type="InterPro" id="IPR019972">
    <property type="entry name" value="Ribosomal_uL14_CS"/>
</dbReference>
<dbReference type="InterPro" id="IPR036853">
    <property type="entry name" value="Ribosomal_uL14_sf"/>
</dbReference>
<dbReference type="NCBIfam" id="TIGR01067">
    <property type="entry name" value="rplN_bact"/>
    <property type="match status" value="1"/>
</dbReference>
<dbReference type="PANTHER" id="PTHR11761">
    <property type="entry name" value="50S/60S RIBOSOMAL PROTEIN L14/L23"/>
    <property type="match status" value="1"/>
</dbReference>
<dbReference type="PANTHER" id="PTHR11761:SF3">
    <property type="entry name" value="LARGE RIBOSOMAL SUBUNIT PROTEIN UL14M"/>
    <property type="match status" value="1"/>
</dbReference>
<dbReference type="Pfam" id="PF00238">
    <property type="entry name" value="Ribosomal_L14"/>
    <property type="match status" value="1"/>
</dbReference>
<dbReference type="SMART" id="SM01374">
    <property type="entry name" value="Ribosomal_L14"/>
    <property type="match status" value="1"/>
</dbReference>
<dbReference type="SUPFAM" id="SSF50193">
    <property type="entry name" value="Ribosomal protein L14"/>
    <property type="match status" value="1"/>
</dbReference>
<dbReference type="PROSITE" id="PS00049">
    <property type="entry name" value="RIBOSOMAL_L14"/>
    <property type="match status" value="1"/>
</dbReference>